<protein>
    <recommendedName>
        <fullName evidence="1">Probable septum site-determining protein MinC</fullName>
    </recommendedName>
</protein>
<feature type="chain" id="PRO_1000047881" description="Probable septum site-determining protein MinC">
    <location>
        <begin position="1"/>
        <end position="228"/>
    </location>
</feature>
<dbReference type="EMBL" id="BX936398">
    <property type="protein sequence ID" value="CAH21299.1"/>
    <property type="molecule type" value="Genomic_DNA"/>
</dbReference>
<dbReference type="RefSeq" id="WP_002220631.1">
    <property type="nucleotide sequence ID" value="NZ_CP009712.1"/>
</dbReference>
<dbReference type="SMR" id="Q66AR9"/>
<dbReference type="GeneID" id="96665552"/>
<dbReference type="KEGG" id="ypo:BZ17_403"/>
<dbReference type="KEGG" id="yps:YPTB2061"/>
<dbReference type="PATRIC" id="fig|273123.14.peg.431"/>
<dbReference type="Proteomes" id="UP000001011">
    <property type="component" value="Chromosome"/>
</dbReference>
<dbReference type="GO" id="GO:0000902">
    <property type="term" value="P:cell morphogenesis"/>
    <property type="evidence" value="ECO:0007669"/>
    <property type="project" value="InterPro"/>
</dbReference>
<dbReference type="GO" id="GO:0000917">
    <property type="term" value="P:division septum assembly"/>
    <property type="evidence" value="ECO:0007669"/>
    <property type="project" value="UniProtKB-KW"/>
</dbReference>
<dbReference type="GO" id="GO:0051302">
    <property type="term" value="P:regulation of cell division"/>
    <property type="evidence" value="ECO:0007669"/>
    <property type="project" value="InterPro"/>
</dbReference>
<dbReference type="GO" id="GO:1901891">
    <property type="term" value="P:regulation of cell septum assembly"/>
    <property type="evidence" value="ECO:0007669"/>
    <property type="project" value="InterPro"/>
</dbReference>
<dbReference type="FunFam" id="2.160.20.70:FF:000002">
    <property type="entry name" value="Probable septum site-determining protein MinC"/>
    <property type="match status" value="1"/>
</dbReference>
<dbReference type="Gene3D" id="2.160.20.70">
    <property type="match status" value="1"/>
</dbReference>
<dbReference type="Gene3D" id="3.30.70.260">
    <property type="match status" value="1"/>
</dbReference>
<dbReference type="HAMAP" id="MF_00267">
    <property type="entry name" value="MinC"/>
    <property type="match status" value="1"/>
</dbReference>
<dbReference type="InterPro" id="IPR016098">
    <property type="entry name" value="CAP/MinC_C"/>
</dbReference>
<dbReference type="InterPro" id="IPR013033">
    <property type="entry name" value="MinC"/>
</dbReference>
<dbReference type="InterPro" id="IPR036145">
    <property type="entry name" value="MinC_C_sf"/>
</dbReference>
<dbReference type="InterPro" id="IPR007874">
    <property type="entry name" value="MinC_N"/>
</dbReference>
<dbReference type="InterPro" id="IPR005526">
    <property type="entry name" value="Septum_form_inhib_MinC_C"/>
</dbReference>
<dbReference type="NCBIfam" id="TIGR01222">
    <property type="entry name" value="minC"/>
    <property type="match status" value="1"/>
</dbReference>
<dbReference type="PANTHER" id="PTHR34108">
    <property type="entry name" value="SEPTUM SITE-DETERMINING PROTEIN MINC"/>
    <property type="match status" value="1"/>
</dbReference>
<dbReference type="PANTHER" id="PTHR34108:SF1">
    <property type="entry name" value="SEPTUM SITE-DETERMINING PROTEIN MINC"/>
    <property type="match status" value="1"/>
</dbReference>
<dbReference type="Pfam" id="PF03775">
    <property type="entry name" value="MinC_C"/>
    <property type="match status" value="1"/>
</dbReference>
<dbReference type="Pfam" id="PF05209">
    <property type="entry name" value="MinC_N"/>
    <property type="match status" value="1"/>
</dbReference>
<dbReference type="SUPFAM" id="SSF63848">
    <property type="entry name" value="Cell-division inhibitor MinC, C-terminal domain"/>
    <property type="match status" value="1"/>
</dbReference>
<proteinExistence type="inferred from homology"/>
<name>MINC_YERPS</name>
<accession>Q66AR9</accession>
<organism>
    <name type="scientific">Yersinia pseudotuberculosis serotype I (strain IP32953)</name>
    <dbReference type="NCBI Taxonomy" id="273123"/>
    <lineage>
        <taxon>Bacteria</taxon>
        <taxon>Pseudomonadati</taxon>
        <taxon>Pseudomonadota</taxon>
        <taxon>Gammaproteobacteria</taxon>
        <taxon>Enterobacterales</taxon>
        <taxon>Yersiniaceae</taxon>
        <taxon>Yersinia</taxon>
    </lineage>
</organism>
<sequence>MSQSPIELKGSSFTLSVVHLHDSRPEVIRQALQEKVDQAPAFLKNAPVVINVATLPNGANWKDLQQAVTSAGLRIVGISGCQDERQKRAIARAGLPLLSEGKGQKLAPEPVISPPENVPTQTRIINTPVRSGQQIYARNCDLIVISSVSAGAELIADGNIHIYGMMRGRALAGASGDAKCQIFCTHLGAELVSIAGQYWLSDQIPLEYFGQAARLYLQDNTLTIQPLN</sequence>
<evidence type="ECO:0000255" key="1">
    <source>
        <dbReference type="HAMAP-Rule" id="MF_00267"/>
    </source>
</evidence>
<gene>
    <name evidence="1" type="primary">minC</name>
    <name type="ordered locus">YPTB2061</name>
</gene>
<comment type="function">
    <text evidence="1">Cell division inhibitor that blocks the formation of polar Z ring septums. Rapidly oscillates between the poles of the cell to destabilize FtsZ filaments that have formed before they mature into polar Z rings. Prevents FtsZ polymerization.</text>
</comment>
<comment type="subunit">
    <text evidence="1">Interacts with MinD and FtsZ.</text>
</comment>
<comment type="similarity">
    <text evidence="1">Belongs to the MinC family.</text>
</comment>
<keyword id="KW-0131">Cell cycle</keyword>
<keyword id="KW-0132">Cell division</keyword>
<keyword id="KW-0717">Septation</keyword>
<reference key="1">
    <citation type="journal article" date="2004" name="Proc. Natl. Acad. Sci. U.S.A.">
        <title>Insights into the evolution of Yersinia pestis through whole-genome comparison with Yersinia pseudotuberculosis.</title>
        <authorList>
            <person name="Chain P.S.G."/>
            <person name="Carniel E."/>
            <person name="Larimer F.W."/>
            <person name="Lamerdin J."/>
            <person name="Stoutland P.O."/>
            <person name="Regala W.M."/>
            <person name="Georgescu A.M."/>
            <person name="Vergez L.M."/>
            <person name="Land M.L."/>
            <person name="Motin V.L."/>
            <person name="Brubaker R.R."/>
            <person name="Fowler J."/>
            <person name="Hinnebusch J."/>
            <person name="Marceau M."/>
            <person name="Medigue C."/>
            <person name="Simonet M."/>
            <person name="Chenal-Francisque V."/>
            <person name="Souza B."/>
            <person name="Dacheux D."/>
            <person name="Elliott J.M."/>
            <person name="Derbise A."/>
            <person name="Hauser L.J."/>
            <person name="Garcia E."/>
        </authorList>
    </citation>
    <scope>NUCLEOTIDE SEQUENCE [LARGE SCALE GENOMIC DNA]</scope>
    <source>
        <strain>IP32953</strain>
    </source>
</reference>